<feature type="chain" id="PRO_0000128676" description="Uncharacterized protein jhp_0078">
    <location>
        <begin position="1"/>
        <end position="62"/>
    </location>
</feature>
<feature type="transmembrane region" description="Helical" evidence="1">
    <location>
        <begin position="17"/>
        <end position="37"/>
    </location>
</feature>
<keyword id="KW-0472">Membrane</keyword>
<keyword id="KW-0812">Transmembrane</keyword>
<keyword id="KW-1133">Transmembrane helix</keyword>
<organism>
    <name type="scientific">Helicobacter pylori (strain J99 / ATCC 700824)</name>
    <name type="common">Campylobacter pylori J99</name>
    <dbReference type="NCBI Taxonomy" id="85963"/>
    <lineage>
        <taxon>Bacteria</taxon>
        <taxon>Pseudomonadati</taxon>
        <taxon>Campylobacterota</taxon>
        <taxon>Epsilonproteobacteria</taxon>
        <taxon>Campylobacterales</taxon>
        <taxon>Helicobacteraceae</taxon>
        <taxon>Helicobacter</taxon>
    </lineage>
</organism>
<comment type="subcellular location">
    <subcellularLocation>
        <location evidence="2">Membrane</location>
        <topology evidence="2">Single-pass membrane protein</topology>
    </subcellularLocation>
</comment>
<proteinExistence type="predicted"/>
<gene>
    <name type="ordered locus">jhp_0078</name>
</gene>
<reference key="1">
    <citation type="journal article" date="1999" name="Nature">
        <title>Genomic sequence comparison of two unrelated isolates of the human gastric pathogen Helicobacter pylori.</title>
        <authorList>
            <person name="Alm R.A."/>
            <person name="Ling L.-S.L."/>
            <person name="Moir D.T."/>
            <person name="King B.L."/>
            <person name="Brown E.D."/>
            <person name="Doig P.C."/>
            <person name="Smith D.R."/>
            <person name="Noonan B."/>
            <person name="Guild B.C."/>
            <person name="deJonge B.L."/>
            <person name="Carmel G."/>
            <person name="Tummino P.J."/>
            <person name="Caruso A."/>
            <person name="Uria-Nickelsen M."/>
            <person name="Mills D.M."/>
            <person name="Ives C."/>
            <person name="Gibson R."/>
            <person name="Merberg D."/>
            <person name="Mills S.D."/>
            <person name="Jiang Q."/>
            <person name="Taylor D.E."/>
            <person name="Vovis G.F."/>
            <person name="Trust T.J."/>
        </authorList>
    </citation>
    <scope>NUCLEOTIDE SEQUENCE [LARGE SCALE GENOMIC DNA]</scope>
    <source>
        <strain>J99 / ATCC 700824</strain>
    </source>
</reference>
<sequence>MQKEQEAQEIAKKAVKIVFFLGLVVVLLMMINLYMLINQINASAQMSHQIKKIEERLNQEQK</sequence>
<protein>
    <recommendedName>
        <fullName>Uncharacterized protein jhp_0078</fullName>
    </recommendedName>
</protein>
<name>Y078_HELPJ</name>
<accession>P64652</accession>
<accession>O24912</accession>
<dbReference type="EMBL" id="AE001439">
    <property type="protein sequence ID" value="AAD05662.1"/>
    <property type="molecule type" value="Genomic_DNA"/>
</dbReference>
<dbReference type="RefSeq" id="WP_001168427.1">
    <property type="nucleotide sequence ID" value="NC_000921.1"/>
</dbReference>
<dbReference type="SMR" id="P64652"/>
<dbReference type="KEGG" id="hpj:jhp_0078"/>
<dbReference type="PATRIC" id="fig|85963.30.peg.955"/>
<dbReference type="Proteomes" id="UP000000804">
    <property type="component" value="Chromosome"/>
</dbReference>
<dbReference type="GO" id="GO:0016020">
    <property type="term" value="C:membrane"/>
    <property type="evidence" value="ECO:0007669"/>
    <property type="project" value="UniProtKB-SubCell"/>
</dbReference>
<dbReference type="InterPro" id="IPR035366">
    <property type="entry name" value="DUF5408"/>
</dbReference>
<dbReference type="Pfam" id="PF17402">
    <property type="entry name" value="DUF5408"/>
    <property type="match status" value="1"/>
</dbReference>
<evidence type="ECO:0000255" key="1"/>
<evidence type="ECO:0000305" key="2"/>